<gene>
    <name type="primary">AGAP7P</name>
    <name type="synonym">AGAP7</name>
    <name type="synonym">CTGLF4</name>
</gene>
<organism>
    <name type="scientific">Homo sapiens</name>
    <name type="common">Human</name>
    <dbReference type="NCBI Taxonomy" id="9606"/>
    <lineage>
        <taxon>Eukaryota</taxon>
        <taxon>Metazoa</taxon>
        <taxon>Chordata</taxon>
        <taxon>Craniata</taxon>
        <taxon>Vertebrata</taxon>
        <taxon>Euteleostomi</taxon>
        <taxon>Mammalia</taxon>
        <taxon>Eutheria</taxon>
        <taxon>Euarchontoglires</taxon>
        <taxon>Primates</taxon>
        <taxon>Haplorrhini</taxon>
        <taxon>Catarrhini</taxon>
        <taxon>Hominidae</taxon>
        <taxon>Homo</taxon>
    </lineage>
</organism>
<proteinExistence type="uncertain"/>
<dbReference type="EMBL" id="AL589822">
    <property type="status" value="NOT_ANNOTATED_CDS"/>
    <property type="molecule type" value="Genomic_DNA"/>
</dbReference>
<dbReference type="SMR" id="Q5VUJ5"/>
<dbReference type="BioGRID" id="575652">
    <property type="interactions" value="3"/>
</dbReference>
<dbReference type="FunCoup" id="Q5VUJ5">
    <property type="interactions" value="6"/>
</dbReference>
<dbReference type="IntAct" id="Q5VUJ5">
    <property type="interactions" value="3"/>
</dbReference>
<dbReference type="MINT" id="Q5VUJ5"/>
<dbReference type="GlyGen" id="Q5VUJ5">
    <property type="glycosylation" value="1 site"/>
</dbReference>
<dbReference type="iPTMnet" id="Q5VUJ5"/>
<dbReference type="PhosphoSitePlus" id="Q5VUJ5"/>
<dbReference type="BioMuta" id="HGNC:23465"/>
<dbReference type="DMDM" id="74756856"/>
<dbReference type="jPOST" id="Q5VUJ5"/>
<dbReference type="MassIVE" id="Q5VUJ5"/>
<dbReference type="PeptideAtlas" id="Q5VUJ5"/>
<dbReference type="AGR" id="HGNC:23465"/>
<dbReference type="GeneCards" id="AGAP7P"/>
<dbReference type="HGNC" id="HGNC:23465">
    <property type="gene designation" value="AGAP7P"/>
</dbReference>
<dbReference type="neXtProt" id="NX_Q5VUJ5"/>
<dbReference type="InParanoid" id="Q5VUJ5"/>
<dbReference type="OrthoDB" id="6136903at2759"/>
<dbReference type="PAN-GO" id="Q5VUJ5">
    <property type="GO annotations" value="3 GO annotations based on evolutionary models"/>
</dbReference>
<dbReference type="PhylomeDB" id="Q5VUJ5"/>
<dbReference type="TreeFam" id="TF317762"/>
<dbReference type="PathwayCommons" id="Q5VUJ5"/>
<dbReference type="SignaLink" id="Q5VUJ5"/>
<dbReference type="Pharos" id="Q5VUJ5">
    <property type="development level" value="Tdark"/>
</dbReference>
<dbReference type="PRO" id="PR:Q5VUJ5"/>
<dbReference type="Proteomes" id="UP000005640">
    <property type="component" value="Unplaced"/>
</dbReference>
<dbReference type="RNAct" id="Q5VUJ5">
    <property type="molecule type" value="protein"/>
</dbReference>
<dbReference type="GO" id="GO:0005096">
    <property type="term" value="F:GTPase activator activity"/>
    <property type="evidence" value="ECO:0000318"/>
    <property type="project" value="GO_Central"/>
</dbReference>
<dbReference type="GO" id="GO:0003924">
    <property type="term" value="F:GTPase activity"/>
    <property type="evidence" value="ECO:0000318"/>
    <property type="project" value="GO_Central"/>
</dbReference>
<dbReference type="GO" id="GO:0008270">
    <property type="term" value="F:zinc ion binding"/>
    <property type="evidence" value="ECO:0007669"/>
    <property type="project" value="UniProtKB-KW"/>
</dbReference>
<dbReference type="CDD" id="cd08836">
    <property type="entry name" value="ArfGap_AGAP"/>
    <property type="match status" value="1"/>
</dbReference>
<dbReference type="CDD" id="cd01250">
    <property type="entry name" value="PH_AGAP"/>
    <property type="match status" value="1"/>
</dbReference>
<dbReference type="FunFam" id="1.10.220.150:FF:000001">
    <property type="entry name" value="Arf-GAP with GTPase, ANK repeat and PH domain-containing protein 1"/>
    <property type="match status" value="1"/>
</dbReference>
<dbReference type="FunFam" id="1.25.40.20:FF:000027">
    <property type="entry name" value="Arf-GAP with GTPase, ANK repeat and PH domain-containing protein 1"/>
    <property type="match status" value="1"/>
</dbReference>
<dbReference type="Gene3D" id="1.25.40.20">
    <property type="entry name" value="Ankyrin repeat-containing domain"/>
    <property type="match status" value="1"/>
</dbReference>
<dbReference type="Gene3D" id="1.10.220.150">
    <property type="entry name" value="Arf GTPase activating protein"/>
    <property type="match status" value="1"/>
</dbReference>
<dbReference type="Gene3D" id="2.30.29.30">
    <property type="entry name" value="Pleckstrin-homology domain (PH domain)/Phosphotyrosine-binding domain (PTB)"/>
    <property type="match status" value="1"/>
</dbReference>
<dbReference type="InterPro" id="IPR002110">
    <property type="entry name" value="Ankyrin_rpt"/>
</dbReference>
<dbReference type="InterPro" id="IPR036770">
    <property type="entry name" value="Ankyrin_rpt-contain_sf"/>
</dbReference>
<dbReference type="InterPro" id="IPR051282">
    <property type="entry name" value="Arf-GAP_GTPase_ANK_PH"/>
</dbReference>
<dbReference type="InterPro" id="IPR037278">
    <property type="entry name" value="ARFGAP/RecO"/>
</dbReference>
<dbReference type="InterPro" id="IPR001164">
    <property type="entry name" value="ArfGAP_dom"/>
</dbReference>
<dbReference type="InterPro" id="IPR038508">
    <property type="entry name" value="ArfGAP_dom_sf"/>
</dbReference>
<dbReference type="InterPro" id="IPR011993">
    <property type="entry name" value="PH-like_dom_sf"/>
</dbReference>
<dbReference type="InterPro" id="IPR001849">
    <property type="entry name" value="PH_domain"/>
</dbReference>
<dbReference type="PANTHER" id="PTHR45819:SF7">
    <property type="entry name" value="ARF-GAP WITH GTPASE, ANK REPEAT AND PH DOMAIN-CONTAINING PROTEIN 4-RELATED"/>
    <property type="match status" value="1"/>
</dbReference>
<dbReference type="PANTHER" id="PTHR45819">
    <property type="entry name" value="CENTAURIN-GAMMA-1A"/>
    <property type="match status" value="1"/>
</dbReference>
<dbReference type="Pfam" id="PF12796">
    <property type="entry name" value="Ank_2"/>
    <property type="match status" value="1"/>
</dbReference>
<dbReference type="Pfam" id="PF01412">
    <property type="entry name" value="ArfGap"/>
    <property type="match status" value="1"/>
</dbReference>
<dbReference type="Pfam" id="PF00169">
    <property type="entry name" value="PH"/>
    <property type="match status" value="1"/>
</dbReference>
<dbReference type="PRINTS" id="PR00405">
    <property type="entry name" value="REVINTRACTNG"/>
</dbReference>
<dbReference type="SMART" id="SM00248">
    <property type="entry name" value="ANK"/>
    <property type="match status" value="2"/>
</dbReference>
<dbReference type="SMART" id="SM00105">
    <property type="entry name" value="ArfGap"/>
    <property type="match status" value="1"/>
</dbReference>
<dbReference type="SMART" id="SM00233">
    <property type="entry name" value="PH"/>
    <property type="match status" value="1"/>
</dbReference>
<dbReference type="SUPFAM" id="SSF48403">
    <property type="entry name" value="Ankyrin repeat"/>
    <property type="match status" value="1"/>
</dbReference>
<dbReference type="SUPFAM" id="SSF57863">
    <property type="entry name" value="ArfGap/RecO-like zinc finger"/>
    <property type="match status" value="1"/>
</dbReference>
<dbReference type="SUPFAM" id="SSF50729">
    <property type="entry name" value="PH domain-like"/>
    <property type="match status" value="1"/>
</dbReference>
<dbReference type="PROSITE" id="PS50297">
    <property type="entry name" value="ANK_REP_REGION"/>
    <property type="match status" value="1"/>
</dbReference>
<dbReference type="PROSITE" id="PS50088">
    <property type="entry name" value="ANK_REPEAT"/>
    <property type="match status" value="1"/>
</dbReference>
<dbReference type="PROSITE" id="PS50115">
    <property type="entry name" value="ARFGAP"/>
    <property type="match status" value="1"/>
</dbReference>
<dbReference type="PROSITE" id="PS50003">
    <property type="entry name" value="PH_DOMAIN"/>
    <property type="match status" value="1"/>
</dbReference>
<feature type="chain" id="PRO_0000284675" description="Putative Arf-GAP with GTPase, ANK repeat and PH domain-containing protein 7">
    <location>
        <begin position="1"/>
        <end position="663"/>
    </location>
</feature>
<feature type="domain" description="PH" evidence="1">
    <location>
        <begin position="259"/>
        <end position="420"/>
    </location>
</feature>
<feature type="domain" description="Arf-GAP" evidence="2">
    <location>
        <begin position="441"/>
        <end position="561"/>
    </location>
</feature>
<feature type="repeat" description="ANK 1">
    <location>
        <begin position="600"/>
        <end position="629"/>
    </location>
</feature>
<feature type="repeat" description="ANK 2">
    <location>
        <begin position="633"/>
        <end position="662"/>
    </location>
</feature>
<feature type="zinc finger region" description="C4-type" evidence="2">
    <location>
        <begin position="456"/>
        <end position="479"/>
    </location>
</feature>
<feature type="region of interest" description="Disordered" evidence="3">
    <location>
        <begin position="182"/>
        <end position="216"/>
    </location>
</feature>
<feature type="region of interest" description="Disordered" evidence="3">
    <location>
        <begin position="231"/>
        <end position="255"/>
    </location>
</feature>
<feature type="compositionally biased region" description="Low complexity" evidence="3">
    <location>
        <begin position="188"/>
        <end position="202"/>
    </location>
</feature>
<feature type="compositionally biased region" description="Polar residues" evidence="3">
    <location>
        <begin position="203"/>
        <end position="216"/>
    </location>
</feature>
<feature type="compositionally biased region" description="Basic and acidic residues" evidence="3">
    <location>
        <begin position="235"/>
        <end position="250"/>
    </location>
</feature>
<protein>
    <recommendedName>
        <fullName>Putative Arf-GAP with GTPase, ANK repeat and PH domain-containing protein 7</fullName>
        <shortName>AGAP-7</shortName>
    </recommendedName>
    <alternativeName>
        <fullName>Arf-GAP with GTPase, ANK repeat and PH domain-containing protein 7 pseudogene</fullName>
    </alternativeName>
    <alternativeName>
        <fullName>Centaurin-gamma-like family member 4</fullName>
    </alternativeName>
</protein>
<accession>Q5VUJ5</accession>
<accession>A6NGH4</accession>
<name>AGAP7_HUMAN</name>
<reference key="1">
    <citation type="journal article" date="2004" name="Nature">
        <title>The DNA sequence and comparative analysis of human chromosome 10.</title>
        <authorList>
            <person name="Deloukas P."/>
            <person name="Earthrowl M.E."/>
            <person name="Grafham D.V."/>
            <person name="Rubenfield M."/>
            <person name="French L."/>
            <person name="Steward C.A."/>
            <person name="Sims S.K."/>
            <person name="Jones M.C."/>
            <person name="Searle S."/>
            <person name="Scott C."/>
            <person name="Howe K."/>
            <person name="Hunt S.E."/>
            <person name="Andrews T.D."/>
            <person name="Gilbert J.G.R."/>
            <person name="Swarbreck D."/>
            <person name="Ashurst J.L."/>
            <person name="Taylor A."/>
            <person name="Battles J."/>
            <person name="Bird C.P."/>
            <person name="Ainscough R."/>
            <person name="Almeida J.P."/>
            <person name="Ashwell R.I.S."/>
            <person name="Ambrose K.D."/>
            <person name="Babbage A.K."/>
            <person name="Bagguley C.L."/>
            <person name="Bailey J."/>
            <person name="Banerjee R."/>
            <person name="Bates K."/>
            <person name="Beasley H."/>
            <person name="Bray-Allen S."/>
            <person name="Brown A.J."/>
            <person name="Brown J.Y."/>
            <person name="Burford D.C."/>
            <person name="Burrill W."/>
            <person name="Burton J."/>
            <person name="Cahill P."/>
            <person name="Camire D."/>
            <person name="Carter N.P."/>
            <person name="Chapman J.C."/>
            <person name="Clark S.Y."/>
            <person name="Clarke G."/>
            <person name="Clee C.M."/>
            <person name="Clegg S."/>
            <person name="Corby N."/>
            <person name="Coulson A."/>
            <person name="Dhami P."/>
            <person name="Dutta I."/>
            <person name="Dunn M."/>
            <person name="Faulkner L."/>
            <person name="Frankish A."/>
            <person name="Frankland J.A."/>
            <person name="Garner P."/>
            <person name="Garnett J."/>
            <person name="Gribble S."/>
            <person name="Griffiths C."/>
            <person name="Grocock R."/>
            <person name="Gustafson E."/>
            <person name="Hammond S."/>
            <person name="Harley J.L."/>
            <person name="Hart E."/>
            <person name="Heath P.D."/>
            <person name="Ho T.P."/>
            <person name="Hopkins B."/>
            <person name="Horne J."/>
            <person name="Howden P.J."/>
            <person name="Huckle E."/>
            <person name="Hynds C."/>
            <person name="Johnson C."/>
            <person name="Johnson D."/>
            <person name="Kana A."/>
            <person name="Kay M."/>
            <person name="Kimberley A.M."/>
            <person name="Kershaw J.K."/>
            <person name="Kokkinaki M."/>
            <person name="Laird G.K."/>
            <person name="Lawlor S."/>
            <person name="Lee H.M."/>
            <person name="Leongamornlert D.A."/>
            <person name="Laird G."/>
            <person name="Lloyd C."/>
            <person name="Lloyd D.M."/>
            <person name="Loveland J."/>
            <person name="Lovell J."/>
            <person name="McLaren S."/>
            <person name="McLay K.E."/>
            <person name="McMurray A."/>
            <person name="Mashreghi-Mohammadi M."/>
            <person name="Matthews L."/>
            <person name="Milne S."/>
            <person name="Nickerson T."/>
            <person name="Nguyen M."/>
            <person name="Overton-Larty E."/>
            <person name="Palmer S.A."/>
            <person name="Pearce A.V."/>
            <person name="Peck A.I."/>
            <person name="Pelan S."/>
            <person name="Phillimore B."/>
            <person name="Porter K."/>
            <person name="Rice C.M."/>
            <person name="Rogosin A."/>
            <person name="Ross M.T."/>
            <person name="Sarafidou T."/>
            <person name="Sehra H.K."/>
            <person name="Shownkeen R."/>
            <person name="Skuce C.D."/>
            <person name="Smith M."/>
            <person name="Standring L."/>
            <person name="Sycamore N."/>
            <person name="Tester J."/>
            <person name="Thorpe A."/>
            <person name="Torcasso W."/>
            <person name="Tracey A."/>
            <person name="Tromans A."/>
            <person name="Tsolas J."/>
            <person name="Wall M."/>
            <person name="Walsh J."/>
            <person name="Wang H."/>
            <person name="Weinstock K."/>
            <person name="West A.P."/>
            <person name="Willey D.L."/>
            <person name="Whitehead S.L."/>
            <person name="Wilming L."/>
            <person name="Wray P.W."/>
            <person name="Young L."/>
            <person name="Chen Y."/>
            <person name="Lovering R.C."/>
            <person name="Moschonas N.K."/>
            <person name="Siebert R."/>
            <person name="Fechtel K."/>
            <person name="Bentley D."/>
            <person name="Durbin R.M."/>
            <person name="Hubbard T."/>
            <person name="Doucette-Stamm L."/>
            <person name="Beck S."/>
            <person name="Smith D.R."/>
            <person name="Rogers J."/>
        </authorList>
    </citation>
    <scope>NUCLEOTIDE SEQUENCE [LARGE SCALE GENOMIC DNA]</scope>
</reference>
<sequence length="663" mass="73211">MGNILTCRVHPSVSLEFDQQQGSVCPSESEIYEAGAEDRMAGAPMAAAVQPAEVTVEVGEDLHMHHVRDREMPEALEFNPSANPEASTIFQRNSQTDVVEIRRSNCTNHVSTVHFSQQYSLCSTIFLDDSTAIQHYLTMTIISVTLEIPHHITQRDADRSLSIPDEQLHSFAVSTVHITKNRNGGGSLNNYSSSIPSTPSTSQEDPQFSVPPTANTPTPVCKRSMRWSNLFTSEKGSDPDKERKAPENHADTIGSGRAIPIKQGMLLKRSGKWLKTWKKKYVTLCSNGVLTYYSSLGDYMKYIHKKEIDLQTSTIKVPGKWPSLATLACTPISSSKSDGLSKDMDTGLGDSICFSPSISSTTIPKLNPPPSPHANKKKHLKKKSTNNFMIVSATGQTWHFEATTYEERDAWVQAIQSQILASLQSCESSKSKSQLTSQSEAMALQSIQNMRGNAHCVDCETQNPKWASLNLGVLMCIECSGIHRSLGTRLSRVRSLELDDWPVELRKVMSSIGNDLANSIWEGSSQGRTKPTEKSTREEKERWIRSKYEEKLFLAPLPCTELSLGQQLLRATADEDLQTAILLLAHGSREEVNETCGEGDGCTALHLACRKGNVVLAQLLIWYGVDVMARDAHGNTALTYARQASSQECINVLLQYGCPDECV</sequence>
<evidence type="ECO:0000255" key="1">
    <source>
        <dbReference type="PROSITE-ProRule" id="PRU00145"/>
    </source>
</evidence>
<evidence type="ECO:0000255" key="2">
    <source>
        <dbReference type="PROSITE-ProRule" id="PRU00288"/>
    </source>
</evidence>
<evidence type="ECO:0000256" key="3">
    <source>
        <dbReference type="SAM" id="MobiDB-lite"/>
    </source>
</evidence>
<evidence type="ECO:0000305" key="4"/>
<comment type="function">
    <text evidence="4">Putative GTPase-activating protein.</text>
</comment>
<comment type="miscellaneous">
    <text>Encoded by one of the numerous copies of centaurin gamma-like genes clustered in the q11 region of chromosome 10.</text>
</comment>
<comment type="similarity">
    <text evidence="4">Belongs to the centaurin gamma-like family.</text>
</comment>
<comment type="caution">
    <text evidence="4">Could be the product of a pseudogene.</text>
</comment>
<keyword id="KW-0040">ANK repeat</keyword>
<keyword id="KW-0343">GTPase activation</keyword>
<keyword id="KW-0479">Metal-binding</keyword>
<keyword id="KW-1185">Reference proteome</keyword>
<keyword id="KW-0677">Repeat</keyword>
<keyword id="KW-0862">Zinc</keyword>
<keyword id="KW-0863">Zinc-finger</keyword>